<reference key="1">
    <citation type="journal article" date="2000" name="Mol. Microbiol.">
        <title>A two-component system involving an HD-GYP domain protein links cell-cell signalling to pathogenicity gene expression in Xanthomonas campestris.</title>
        <authorList>
            <person name="Slater H."/>
            <person name="Alvarez-Morales A."/>
            <person name="Barber C.E."/>
            <person name="Daniels M.J."/>
            <person name="Dow J.M."/>
        </authorList>
    </citation>
    <scope>NUCLEOTIDE SEQUENCE [GENOMIC DNA]</scope>
    <scope>FUNCTION</scope>
    <source>
        <strain>8004</strain>
    </source>
</reference>
<reference key="2">
    <citation type="journal article" date="2005" name="Genome Res.">
        <title>Comparative and functional genomic analyses of the pathogenicity of phytopathogen Xanthomonas campestris pv. campestris.</title>
        <authorList>
            <person name="Qian W."/>
            <person name="Jia Y."/>
            <person name="Ren S.-X."/>
            <person name="He Y.-Q."/>
            <person name="Feng J.-X."/>
            <person name="Lu L.-F."/>
            <person name="Sun Q."/>
            <person name="Ying G."/>
            <person name="Tang D.-J."/>
            <person name="Tang H."/>
            <person name="Wu W."/>
            <person name="Hao P."/>
            <person name="Wang L."/>
            <person name="Jiang B.-L."/>
            <person name="Zeng S."/>
            <person name="Gu W.-Y."/>
            <person name="Lu G."/>
            <person name="Rong L."/>
            <person name="Tian Y."/>
            <person name="Yao Z."/>
            <person name="Fu G."/>
            <person name="Chen B."/>
            <person name="Fang R."/>
            <person name="Qiang B."/>
            <person name="Chen Z."/>
            <person name="Zhao G.-P."/>
            <person name="Tang J.-L."/>
            <person name="He C."/>
        </authorList>
    </citation>
    <scope>NUCLEOTIDE SEQUENCE [LARGE SCALE GENOMIC DNA]</scope>
    <source>
        <strain>8004</strain>
    </source>
</reference>
<reference key="3">
    <citation type="journal article" date="2003" name="Proc. Natl. Acad. Sci. U.S.A.">
        <title>Biofilm dispersal in Xanthomonas campestris is controlled by cell-cell signaling and is required for full virulence to plants.</title>
        <authorList>
            <person name="Dow J.M."/>
            <person name="Crossman L."/>
            <person name="Findlay K."/>
            <person name="He Y.Q."/>
            <person name="Feng J.X."/>
            <person name="Tang J.L."/>
        </authorList>
    </citation>
    <scope>FUNCTION</scope>
    <source>
        <strain>8004</strain>
    </source>
</reference>
<reference key="4">
    <citation type="journal article" date="2004" name="Microbes Infect.">
        <title>Biofilm formation and dispersal in Xanthomonas campestris.</title>
        <authorList>
            <person name="Crossman L."/>
            <person name="Dow J.M."/>
        </authorList>
    </citation>
    <scope>FUNCTION</scope>
    <scope>REVIEW</scope>
</reference>
<reference key="5">
    <citation type="journal article" date="2006" name="Proc. Natl. Acad. Sci. U.S.A.">
        <title>Cell-cell signaling in Xanthomonas campestris involves an HD-GYP domain protein that functions in cyclic di-GMP turnover.</title>
        <authorList>
            <person name="Ryan R.P."/>
            <person name="Fouhy Y."/>
            <person name="Lucey J.F."/>
            <person name="Crossman L.C."/>
            <person name="Spiro S."/>
            <person name="He Y.W."/>
            <person name="Zhang L.H."/>
            <person name="Heeb S."/>
            <person name="Camara M."/>
            <person name="Williams P."/>
            <person name="Dow J.M."/>
        </authorList>
    </citation>
    <scope>RETRACTED PAPER</scope>
    <source>
        <strain>8004</strain>
    </source>
</reference>
<reference key="6">
    <citation type="journal article" date="2017" name="Proc. Natl. Acad. Sci. U.S.A.">
        <authorList>
            <person name="Ryan R.P."/>
            <person name="Fouhy Y."/>
            <person name="Lucey J.F."/>
            <person name="Crossman L.C."/>
            <person name="Spiro S."/>
            <person name="He Y.W."/>
            <person name="Zhang L.H."/>
            <person name="Heeb S."/>
            <person name="Camara M."/>
            <person name="Williams P."/>
            <person name="Dow J.M."/>
        </authorList>
    </citation>
    <scope>RETRACTION NOTICE OF PUBMED:16611728</scope>
</reference>
<reference key="7">
    <citation type="journal article" date="2007" name="Mol. Microbiol.">
        <title>Xanthomonas campestris cell-cell communication involves a putative nucleotide receptor protein Clp and a hierarchical signalling network.</title>
        <authorList>
            <person name="He Y.W."/>
            <person name="Ng A.Y."/>
            <person name="Xu M."/>
            <person name="Lin K."/>
            <person name="Wang L.H."/>
            <person name="Dong Y.H."/>
            <person name="Zhang L.H."/>
        </authorList>
    </citation>
    <scope>FUNCTION</scope>
    <source>
        <strain>Xc1</strain>
    </source>
</reference>
<reference key="8">
    <citation type="journal article" date="2010" name="Proc. Natl. Acad. Sci. U.S.A.">
        <title>Cell-cell signal-dependent dynamic interactions between HD-GYP and GGDEF domain proteins mediate virulence in Xanthomonas campestris.</title>
        <authorList>
            <person name="Ryan R.P."/>
            <person name="McCarthy Y."/>
            <person name="Andrade M."/>
            <person name="Farah C.S."/>
            <person name="Armitage J.P."/>
            <person name="Dow J.M."/>
        </authorList>
    </citation>
    <scope>FUNCTION</scope>
    <scope>INTERACTION WITH GGDEF DOMAIN</scope>
    <scope>SUBCELLULAR LOCATION</scope>
    <scope>DOMAIN</scope>
    <scope>MUTAGENESIS OF HIS-231; ASP-232; GLY-294; TYR-295 AND PRO-296</scope>
    <source>
        <strain>8004</strain>
    </source>
</reference>
<comment type="function">
    <text evidence="4 5 6 7 8">Member of the two-component regulatory system RpfG/RpfC, which is involved in the perception and response to the diffusible signaling factor (DSF), which is essential for cell-cell signaling (PubMed:11123673, PubMed:12960398). Detection of DSF leads to the positive regulation of biofilm dispersal and the production of virulence factors (PubMed:12960398). Activated RpfG degrades cyclic di-GMP to GMP, leading to the activation of Clp, a global transcriptional regulator that regulates a large set of genes in DSF pathway. May also directly control genes involved in biofilm dispersal (PubMed:15158198, PubMed:17378922, PubMed:20231439).</text>
</comment>
<comment type="catalytic activity">
    <reaction evidence="1">
        <text>3',3'-c-di-GMP + 2 H2O = 2 GMP + 2 H(+)</text>
        <dbReference type="Rhea" id="RHEA:52928"/>
        <dbReference type="ChEBI" id="CHEBI:15377"/>
        <dbReference type="ChEBI" id="CHEBI:15378"/>
        <dbReference type="ChEBI" id="CHEBI:58115"/>
        <dbReference type="ChEBI" id="CHEBI:58805"/>
    </reaction>
</comment>
<comment type="subunit">
    <text evidence="8">Interacts with a subset of GGDEF domain-containing proteins.</text>
</comment>
<comment type="interaction">
    <interactant intactId="EBI-16222292">
        <id>Q4UU85</id>
    </interactant>
    <interactant intactId="EBI-16222374">
        <id>A0A0H2X359</id>
        <label>XC_0249</label>
    </interactant>
    <organismsDiffer>false</organismsDiffer>
    <experiments>5</experiments>
</comment>
<comment type="interaction">
    <interactant intactId="EBI-16222292">
        <id>Q4UU85</id>
    </interactant>
    <interactant intactId="EBI-16222336">
        <id>A0A0H2X3K2</id>
        <label>XC_0420</label>
    </interactant>
    <organismsDiffer>false</organismsDiffer>
    <experiments>4</experiments>
</comment>
<comment type="interaction">
    <interactant intactId="EBI-16222292">
        <id>Q4UU85</id>
    </interactant>
    <interactant intactId="EBI-16222310">
        <id>A0A0H2X560</id>
        <label>XC_0613</label>
    </interactant>
    <organismsDiffer>false</organismsDiffer>
    <experiments>3</experiments>
</comment>
<comment type="interaction">
    <interactant intactId="EBI-16222292">
        <id>Q4UU85</id>
    </interactant>
    <interactant intactId="EBI-16222750">
        <id>A0A0H2X5F3</id>
        <label>XC_0675</label>
    </interactant>
    <organismsDiffer>false</organismsDiffer>
    <experiments>2</experiments>
</comment>
<comment type="interaction">
    <interactant intactId="EBI-16222292">
        <id>Q4UU85</id>
    </interactant>
    <interactant intactId="EBI-16222575">
        <id>A0A0H2X6P1</id>
        <label>XC_1803</label>
    </interactant>
    <organismsDiffer>false</organismsDiffer>
    <experiments>3</experiments>
</comment>
<comment type="interaction">
    <interactant intactId="EBI-16222292">
        <id>Q4UU85</id>
    </interactant>
    <interactant intactId="EBI-16222601">
        <id>A0A0H2X9F2</id>
        <label>XC_2866</label>
    </interactant>
    <organismsDiffer>false</organismsDiffer>
    <experiments>2</experiments>
</comment>
<comment type="subcellular location">
    <subcellularLocation>
        <location evidence="9">Cytoplasm</location>
    </subcellularLocation>
    <text evidence="8">Localizes predominantly at the cell poles.</text>
</comment>
<comment type="domain">
    <text evidence="8">Contains a C-terminal HD-GYP (modified HD) domain, which is involved in degradation of cyclic di-GMP. The GYP motif is required for interaction with GGDEF domain-containing proteins.</text>
</comment>
<comment type="PTM">
    <text evidence="10">Phosphorylated and activated by RpfC.</text>
</comment>
<comment type="caution">
    <text evidence="11 12">The article describing the function and the phosphodiesterase activity has been retracted due to duplications and irregularities in some figures, but repeated experiments using the original strains support the findings.</text>
</comment>
<accession>Q4UU85</accession>
<accession>Q9L433</accession>
<dbReference type="EC" id="3.1.4.-" evidence="1"/>
<dbReference type="EMBL" id="AJ251547">
    <property type="protein sequence ID" value="CAB89843.1"/>
    <property type="molecule type" value="Genomic_DNA"/>
</dbReference>
<dbReference type="EMBL" id="CP000050">
    <property type="protein sequence ID" value="AAY49388.1"/>
    <property type="molecule type" value="Genomic_DNA"/>
</dbReference>
<dbReference type="RefSeq" id="WP_011037024.1">
    <property type="nucleotide sequence ID" value="NZ_CP155948.1"/>
</dbReference>
<dbReference type="SMR" id="Q4UU85"/>
<dbReference type="DIP" id="DIP-58626N"/>
<dbReference type="IntAct" id="Q4UU85">
    <property type="interactions" value="10"/>
</dbReference>
<dbReference type="KEGG" id="xcb:XC_2335"/>
<dbReference type="HOGENOM" id="CLU_000445_92_10_6"/>
<dbReference type="Proteomes" id="UP000000420">
    <property type="component" value="Chromosome"/>
</dbReference>
<dbReference type="GO" id="GO:0005737">
    <property type="term" value="C:cytoplasm"/>
    <property type="evidence" value="ECO:0007669"/>
    <property type="project" value="UniProtKB-SubCell"/>
</dbReference>
<dbReference type="GO" id="GO:0008081">
    <property type="term" value="F:phosphoric diester hydrolase activity"/>
    <property type="evidence" value="ECO:0007669"/>
    <property type="project" value="UniProtKB-ARBA"/>
</dbReference>
<dbReference type="GO" id="GO:0000160">
    <property type="term" value="P:phosphorelay signal transduction system"/>
    <property type="evidence" value="ECO:0007669"/>
    <property type="project" value="UniProtKB-KW"/>
</dbReference>
<dbReference type="CDD" id="cd00077">
    <property type="entry name" value="HDc"/>
    <property type="match status" value="1"/>
</dbReference>
<dbReference type="CDD" id="cd17551">
    <property type="entry name" value="REC_RpfG-like"/>
    <property type="match status" value="1"/>
</dbReference>
<dbReference type="FunFam" id="1.10.3210.10:FF:000018">
    <property type="entry name" value="Two-component system response regulator"/>
    <property type="match status" value="1"/>
</dbReference>
<dbReference type="Gene3D" id="3.40.50.2300">
    <property type="match status" value="1"/>
</dbReference>
<dbReference type="Gene3D" id="1.10.3210.10">
    <property type="entry name" value="Hypothetical protein af1432"/>
    <property type="match status" value="1"/>
</dbReference>
<dbReference type="InterPro" id="IPR011006">
    <property type="entry name" value="CheY-like_superfamily"/>
</dbReference>
<dbReference type="InterPro" id="IPR052020">
    <property type="entry name" value="Cyclic_di-GMP/3'3'-cGAMP_PDE"/>
</dbReference>
<dbReference type="InterPro" id="IPR003607">
    <property type="entry name" value="HD/PDEase_dom"/>
</dbReference>
<dbReference type="InterPro" id="IPR037522">
    <property type="entry name" value="HD_GYP_dom"/>
</dbReference>
<dbReference type="InterPro" id="IPR001789">
    <property type="entry name" value="Sig_transdc_resp-reg_receiver"/>
</dbReference>
<dbReference type="PANTHER" id="PTHR45228:SF1">
    <property type="entry name" value="CYCLIC DI-GMP PHOSPHODIESTERASE TM_0186"/>
    <property type="match status" value="1"/>
</dbReference>
<dbReference type="PANTHER" id="PTHR45228">
    <property type="entry name" value="CYCLIC DI-GMP PHOSPHODIESTERASE TM_0186-RELATED"/>
    <property type="match status" value="1"/>
</dbReference>
<dbReference type="Pfam" id="PF13487">
    <property type="entry name" value="HD_5"/>
    <property type="match status" value="1"/>
</dbReference>
<dbReference type="Pfam" id="PF00072">
    <property type="entry name" value="Response_reg"/>
    <property type="match status" value="1"/>
</dbReference>
<dbReference type="SMART" id="SM00471">
    <property type="entry name" value="HDc"/>
    <property type="match status" value="1"/>
</dbReference>
<dbReference type="SMART" id="SM00448">
    <property type="entry name" value="REC"/>
    <property type="match status" value="1"/>
</dbReference>
<dbReference type="SUPFAM" id="SSF52172">
    <property type="entry name" value="CheY-like"/>
    <property type="match status" value="1"/>
</dbReference>
<dbReference type="SUPFAM" id="SSF109604">
    <property type="entry name" value="HD-domain/PDEase-like"/>
    <property type="match status" value="1"/>
</dbReference>
<dbReference type="PROSITE" id="PS51832">
    <property type="entry name" value="HD_GYP"/>
    <property type="match status" value="1"/>
</dbReference>
<dbReference type="PROSITE" id="PS50110">
    <property type="entry name" value="RESPONSE_REGULATORY"/>
    <property type="match status" value="1"/>
</dbReference>
<proteinExistence type="evidence at protein level"/>
<name>RPFG_XANC8</name>
<evidence type="ECO:0000250" key="1">
    <source>
        <dbReference type="UniProtKB" id="Q9WY30"/>
    </source>
</evidence>
<evidence type="ECO:0000255" key="2">
    <source>
        <dbReference type="PROSITE-ProRule" id="PRU00169"/>
    </source>
</evidence>
<evidence type="ECO:0000255" key="3">
    <source>
        <dbReference type="PROSITE-ProRule" id="PRU01176"/>
    </source>
</evidence>
<evidence type="ECO:0000269" key="4">
    <source>
    </source>
</evidence>
<evidence type="ECO:0000269" key="5">
    <source>
    </source>
</evidence>
<evidence type="ECO:0000269" key="6">
    <source>
    </source>
</evidence>
<evidence type="ECO:0000269" key="7">
    <source>
    </source>
</evidence>
<evidence type="ECO:0000269" key="8">
    <source>
    </source>
</evidence>
<evidence type="ECO:0000305" key="9"/>
<evidence type="ECO:0000305" key="10">
    <source>
    </source>
</evidence>
<evidence type="ECO:0000305" key="11">
    <source>
    </source>
</evidence>
<evidence type="ECO:0000305" key="12">
    <source>
    </source>
</evidence>
<organism>
    <name type="scientific">Xanthomonas campestris pv. campestris (strain 8004)</name>
    <dbReference type="NCBI Taxonomy" id="314565"/>
    <lineage>
        <taxon>Bacteria</taxon>
        <taxon>Pseudomonadati</taxon>
        <taxon>Pseudomonadota</taxon>
        <taxon>Gammaproteobacteria</taxon>
        <taxon>Lysobacterales</taxon>
        <taxon>Lysobacteraceae</taxon>
        <taxon>Xanthomonas</taxon>
    </lineage>
</organism>
<gene>
    <name type="primary">rpfG</name>
    <name type="ordered locus">XC_2335</name>
</gene>
<protein>
    <recommendedName>
        <fullName>Cyclic di-GMP phosphodiesterase response regulator RpfG</fullName>
        <ecNumber evidence="1">3.1.4.-</ecNumber>
    </recommendedName>
</protein>
<feature type="chain" id="PRO_0000081219" description="Cyclic di-GMP phosphodiesterase response regulator RpfG">
    <location>
        <begin position="1"/>
        <end position="378"/>
    </location>
</feature>
<feature type="domain" description="Response regulatory" evidence="2">
    <location>
        <begin position="29"/>
        <end position="147"/>
    </location>
</feature>
<feature type="domain" description="HD-GYP" evidence="3">
    <location>
        <begin position="174"/>
        <end position="371"/>
    </location>
</feature>
<feature type="modified residue" description="4-aspartylphosphate" evidence="2">
    <location>
        <position position="80"/>
    </location>
</feature>
<feature type="mutagenesis site" description="Does not affect interaction with GGDEF domain." evidence="8">
    <original>H</original>
    <variation>A</variation>
    <location>
        <position position="231"/>
    </location>
</feature>
<feature type="mutagenesis site" description="Does not affect interaction with GGDEF domain." evidence="8">
    <original>D</original>
    <variation>A</variation>
    <location>
        <position position="232"/>
    </location>
</feature>
<feature type="mutagenesis site" description="Decreases interaction with GGDEF domain." evidence="8">
    <original>G</original>
    <variation>A</variation>
    <location>
        <position position="294"/>
    </location>
</feature>
<feature type="mutagenesis site" description="Decreases interaction with GGDEF domain." evidence="8">
    <original>Y</original>
    <variation>A</variation>
    <location>
        <position position="295"/>
    </location>
</feature>
<feature type="mutagenesis site" description="Decreases interaction with GGDEF domain." evidence="8">
    <original>P</original>
    <variation>A</variation>
    <location>
        <position position="296"/>
    </location>
</feature>
<keyword id="KW-0973">c-di-GMP</keyword>
<keyword id="KW-0963">Cytoplasm</keyword>
<keyword id="KW-0378">Hydrolase</keyword>
<keyword id="KW-0597">Phosphoprotein</keyword>
<keyword id="KW-0807">Transducer</keyword>
<keyword id="KW-0902">Two-component regulatory system</keyword>
<keyword id="KW-0843">Virulence</keyword>
<sequence length="378" mass="42173">MQDVLGNPAGVSSAETWGSWSEKADLGLNIVIVDDQMSARTMLRHVIEDIAPELKVYDFGDPLDALSWCEAGRVDLLLLDYRMPGMDGLEFARRLRRLPSHRDIPIILITIVGDEPIRQAALEAGVIDFLVKPIRPRELRARCSNLLQLRQQSESVKQRALSLEQRLLASMNEVEERERETLSRLARAIEYRDGGTSAFLERMSHVAGLVAEQLGLSEEEVRIIEMAAPLHDMGKIAIPDSVLLKPGKLTEDEMNVMKRHPRIGYELLSGSQNRFIQVGALIALRHHERYDGSGYPDGLVGEAIPLEARIVAVADVFDALLSARPYKEAWTMDAALAYLYAQRGRLFDPRCVDALLRGRAQLEQICGQFSTASARPGV</sequence>